<proteinExistence type="inferred from homology"/>
<organism>
    <name type="scientific">Mycobacterium bovis (strain ATCC BAA-935 / AF2122/97)</name>
    <dbReference type="NCBI Taxonomy" id="233413"/>
    <lineage>
        <taxon>Bacteria</taxon>
        <taxon>Bacillati</taxon>
        <taxon>Actinomycetota</taxon>
        <taxon>Actinomycetes</taxon>
        <taxon>Mycobacteriales</taxon>
        <taxon>Mycobacteriaceae</taxon>
        <taxon>Mycobacterium</taxon>
        <taxon>Mycobacterium tuberculosis complex</taxon>
    </lineage>
</organism>
<sequence>MTATQSPPEPAPDRVRLAGCPLAGTPDVGLTAQDATTALGVPTRRRASSGGIPVATSMWRDAQTVRTYGPAVAKALALRVAGKARSRLTGRHCRKFMQLTDFDPFDPAIAADPYPHYRELLAGERVQYNPKRDVYILSRYADVREAARNHDTLSSARGVTFSRGWLPFLPTSDPPAHTRMRKQLAPGMARGALETWRPMVDQLARELVGGLLTQTPADVVSTVAAPMPMRAITSVLGVDGPDEAAFCRLSNQAVRITDVALSASGLISLVQGFAGFRRLRALFTHRRDNGLLRECTVLGKLATHAEQGRLSDDELFFFAVLLLVAGYESTAHMISTLFLTLADYPDQLTLLAQQPDLIPSAIEEHLRFISPIQNICRTTRVDYSVGQAVIPAGSLVLLAWGAANRDPRQYEDPDVFRADRNPVGHLAFGSGIHLCPGTQLARMEGQAILREIVANIDRIEVVEPPTWTTNANLRGLTRLRVAVTPRVAP</sequence>
<feature type="chain" id="PRO_0000052283" description="Beta-dihydromenaquinone-9 omega-hydroxylase">
    <location>
        <begin position="1"/>
        <end position="489"/>
    </location>
</feature>
<feature type="binding site" description="axial binding residue" evidence="2">
    <location>
        <position position="435"/>
    </location>
    <ligand>
        <name>heme</name>
        <dbReference type="ChEBI" id="CHEBI:30413"/>
    </ligand>
    <ligandPart>
        <name>Fe</name>
        <dbReference type="ChEBI" id="CHEBI:18248"/>
    </ligandPart>
</feature>
<comment type="function">
    <text evidence="1">Involved in the biosynthesis of sulfomenaquinone (SMK, initially named S881 on the basis of its mass), which is localized in the outer envelope of M.bovis and negatively regulates its virulence. Catalyzes the hydroxylation of beta-dihydromenaquinone-9, leading to the formation of omega-hydroxy-beta-dihydromenaquinone-9.</text>
</comment>
<comment type="catalytic activity">
    <reaction evidence="1">
        <text>beta-dihydromenaquinone-9 + 2 reduced [2Fe-2S]-[ferredoxin] + O2 + 2 H(+) = omega-hydroxy-beta-dihydromenaquinone-9 + 2 oxidized [2Fe-2S]-[ferredoxin] + H2O</text>
        <dbReference type="Rhea" id="RHEA:56680"/>
        <dbReference type="Rhea" id="RHEA-COMP:10000"/>
        <dbReference type="Rhea" id="RHEA-COMP:10001"/>
        <dbReference type="ChEBI" id="CHEBI:15377"/>
        <dbReference type="ChEBI" id="CHEBI:15378"/>
        <dbReference type="ChEBI" id="CHEBI:15379"/>
        <dbReference type="ChEBI" id="CHEBI:33737"/>
        <dbReference type="ChEBI" id="CHEBI:33738"/>
        <dbReference type="ChEBI" id="CHEBI:134607"/>
        <dbReference type="ChEBI" id="CHEBI:140189"/>
        <dbReference type="EC" id="1.14.15.27"/>
    </reaction>
    <physiologicalReaction direction="left-to-right" evidence="1">
        <dbReference type="Rhea" id="RHEA:56681"/>
    </physiologicalReaction>
</comment>
<comment type="cofactor">
    <cofactor evidence="2">
        <name>heme</name>
        <dbReference type="ChEBI" id="CHEBI:30413"/>
    </cofactor>
</comment>
<comment type="subcellular location">
    <subcellularLocation>
        <location evidence="1">Cytoplasm</location>
    </subcellularLocation>
</comment>
<comment type="similarity">
    <text evidence="3">Belongs to the cytochrome P450 family.</text>
</comment>
<protein>
    <recommendedName>
        <fullName evidence="1">Beta-dihydromenaquinone-9 omega-hydroxylase</fullName>
        <ecNumber evidence="1">1.14.15.27</ecNumber>
    </recommendedName>
    <alternativeName>
        <fullName evidence="1">Cytochrome P450 128</fullName>
    </alternativeName>
</protein>
<gene>
    <name type="primary">cyp128</name>
    <name type="ordered locus">BQ2027_MB2291C</name>
</gene>
<accession>P63714</accession>
<accession>A0A1R3Y0Q6</accession>
<accession>Q59572</accession>
<accession>X2BKL8</accession>
<dbReference type="EC" id="1.14.15.27" evidence="1"/>
<dbReference type="EMBL" id="LT708304">
    <property type="protein sequence ID" value="SIU00902.1"/>
    <property type="molecule type" value="Genomic_DNA"/>
</dbReference>
<dbReference type="RefSeq" id="NP_855940.1">
    <property type="nucleotide sequence ID" value="NC_002945.3"/>
</dbReference>
<dbReference type="RefSeq" id="WP_003411663.1">
    <property type="nucleotide sequence ID" value="NC_002945.4"/>
</dbReference>
<dbReference type="SMR" id="P63714"/>
<dbReference type="KEGG" id="mbo:BQ2027_MB2291C"/>
<dbReference type="PATRIC" id="fig|233413.5.peg.2516"/>
<dbReference type="Proteomes" id="UP000001419">
    <property type="component" value="Chromosome"/>
</dbReference>
<dbReference type="GO" id="GO:0005737">
    <property type="term" value="C:cytoplasm"/>
    <property type="evidence" value="ECO:0007669"/>
    <property type="project" value="UniProtKB-SubCell"/>
</dbReference>
<dbReference type="GO" id="GO:0036199">
    <property type="term" value="F:cholest-4-en-3-one 26-monooxygenase activity"/>
    <property type="evidence" value="ECO:0007669"/>
    <property type="project" value="TreeGrafter"/>
</dbReference>
<dbReference type="GO" id="GO:0020037">
    <property type="term" value="F:heme binding"/>
    <property type="evidence" value="ECO:0007669"/>
    <property type="project" value="InterPro"/>
</dbReference>
<dbReference type="GO" id="GO:0005506">
    <property type="term" value="F:iron ion binding"/>
    <property type="evidence" value="ECO:0007669"/>
    <property type="project" value="InterPro"/>
</dbReference>
<dbReference type="GO" id="GO:0008395">
    <property type="term" value="F:steroid hydroxylase activity"/>
    <property type="evidence" value="ECO:0007669"/>
    <property type="project" value="TreeGrafter"/>
</dbReference>
<dbReference type="GO" id="GO:0006707">
    <property type="term" value="P:cholesterol catabolic process"/>
    <property type="evidence" value="ECO:0007669"/>
    <property type="project" value="TreeGrafter"/>
</dbReference>
<dbReference type="Gene3D" id="1.10.630.10">
    <property type="entry name" value="Cytochrome P450"/>
    <property type="match status" value="1"/>
</dbReference>
<dbReference type="InterPro" id="IPR001128">
    <property type="entry name" value="Cyt_P450"/>
</dbReference>
<dbReference type="InterPro" id="IPR002397">
    <property type="entry name" value="Cyt_P450_B"/>
</dbReference>
<dbReference type="InterPro" id="IPR017972">
    <property type="entry name" value="Cyt_P450_CS"/>
</dbReference>
<dbReference type="InterPro" id="IPR036396">
    <property type="entry name" value="Cyt_P450_sf"/>
</dbReference>
<dbReference type="PANTHER" id="PTHR46696:SF4">
    <property type="entry name" value="BIOTIN BIOSYNTHESIS CYTOCHROME P450"/>
    <property type="match status" value="1"/>
</dbReference>
<dbReference type="PANTHER" id="PTHR46696">
    <property type="entry name" value="P450, PUTATIVE (EUROFUNG)-RELATED"/>
    <property type="match status" value="1"/>
</dbReference>
<dbReference type="Pfam" id="PF00067">
    <property type="entry name" value="p450"/>
    <property type="match status" value="1"/>
</dbReference>
<dbReference type="PRINTS" id="PR00359">
    <property type="entry name" value="BP450"/>
</dbReference>
<dbReference type="SUPFAM" id="SSF48264">
    <property type="entry name" value="Cytochrome P450"/>
    <property type="match status" value="1"/>
</dbReference>
<dbReference type="PROSITE" id="PS00086">
    <property type="entry name" value="CYTOCHROME_P450"/>
    <property type="match status" value="1"/>
</dbReference>
<name>CP128_MYCBO</name>
<keyword id="KW-0963">Cytoplasm</keyword>
<keyword id="KW-0349">Heme</keyword>
<keyword id="KW-0408">Iron</keyword>
<keyword id="KW-0479">Metal-binding</keyword>
<keyword id="KW-0503">Monooxygenase</keyword>
<keyword id="KW-0560">Oxidoreductase</keyword>
<keyword id="KW-1185">Reference proteome</keyword>
<reference key="1">
    <citation type="journal article" date="2003" name="Proc. Natl. Acad. Sci. U.S.A.">
        <title>The complete genome sequence of Mycobacterium bovis.</title>
        <authorList>
            <person name="Garnier T."/>
            <person name="Eiglmeier K."/>
            <person name="Camus J.-C."/>
            <person name="Medina N."/>
            <person name="Mansoor H."/>
            <person name="Pryor M."/>
            <person name="Duthoy S."/>
            <person name="Grondin S."/>
            <person name="Lacroix C."/>
            <person name="Monsempe C."/>
            <person name="Simon S."/>
            <person name="Harris B."/>
            <person name="Atkin R."/>
            <person name="Doggett J."/>
            <person name="Mayes R."/>
            <person name="Keating L."/>
            <person name="Wheeler P.R."/>
            <person name="Parkhill J."/>
            <person name="Barrell B.G."/>
            <person name="Cole S.T."/>
            <person name="Gordon S.V."/>
            <person name="Hewinson R.G."/>
        </authorList>
    </citation>
    <scope>NUCLEOTIDE SEQUENCE [LARGE SCALE GENOMIC DNA]</scope>
    <source>
        <strain>ATCC BAA-935 / AF2122/97</strain>
    </source>
</reference>
<reference key="2">
    <citation type="journal article" date="2017" name="Genome Announc.">
        <title>Updated reference genome sequence and annotation of Mycobacterium bovis AF2122/97.</title>
        <authorList>
            <person name="Malone K.M."/>
            <person name="Farrell D."/>
            <person name="Stuber T.P."/>
            <person name="Schubert O.T."/>
            <person name="Aebersold R."/>
            <person name="Robbe-Austerman S."/>
            <person name="Gordon S.V."/>
        </authorList>
    </citation>
    <scope>NUCLEOTIDE SEQUENCE [LARGE SCALE GENOMIC DNA]</scope>
    <scope>GENOME REANNOTATION</scope>
    <source>
        <strain>ATCC BAA-935 / AF2122/97</strain>
    </source>
</reference>
<evidence type="ECO:0000250" key="1">
    <source>
        <dbReference type="UniProtKB" id="P9WPN7"/>
    </source>
</evidence>
<evidence type="ECO:0000250" key="2">
    <source>
        <dbReference type="UniProtKB" id="Q00441"/>
    </source>
</evidence>
<evidence type="ECO:0000305" key="3"/>